<name>SIAP_VIBCH</name>
<accession>Q9KR64</accession>
<comment type="function">
    <text evidence="2 3">Part of the tripartite ATP-independent periplasmic (TRAP) transport system SiaPQM that catalyzes unidirectional Na(+)-dependent sialic acid uptake. Binds the common sialic acid N-acetylneuraminic acid (Neu5Ac) with a high affinity.</text>
</comment>
<comment type="subunit">
    <text evidence="2">The complex comprises the extracytoplasmic solute receptor protein SiaP, and the two transmembrane proteins SiaQ and SiaM.</text>
</comment>
<comment type="subcellular location">
    <subcellularLocation>
        <location evidence="5">Periplasm</location>
    </subcellularLocation>
</comment>
<comment type="similarity">
    <text evidence="5">Belongs to the bacterial solute-binding protein 7 family.</text>
</comment>
<gene>
    <name evidence="4" type="primary">siaP</name>
    <name evidence="6" type="ordered locus">VC_1779</name>
</gene>
<dbReference type="EMBL" id="AE003852">
    <property type="protein sequence ID" value="AAF94928.1"/>
    <property type="molecule type" value="Genomic_DNA"/>
</dbReference>
<dbReference type="PIR" id="H82157">
    <property type="entry name" value="H82157"/>
</dbReference>
<dbReference type="RefSeq" id="NP_231414.1">
    <property type="nucleotide sequence ID" value="NC_002505.1"/>
</dbReference>
<dbReference type="RefSeq" id="WP_000849284.1">
    <property type="nucleotide sequence ID" value="NZ_LT906614.1"/>
</dbReference>
<dbReference type="PDB" id="5LTC">
    <property type="method" value="X-ray"/>
    <property type="resolution" value="2.10 A"/>
    <property type="chains" value="A/B=22-321"/>
</dbReference>
<dbReference type="PDB" id="7A5C">
    <property type="method" value="X-ray"/>
    <property type="resolution" value="2.20 A"/>
    <property type="chains" value="A/B=23-321"/>
</dbReference>
<dbReference type="PDB" id="7A5Q">
    <property type="method" value="X-ray"/>
    <property type="resolution" value="1.68 A"/>
    <property type="chains" value="A/B=23-321"/>
</dbReference>
<dbReference type="PDB" id="9FVB">
    <property type="method" value="X-ray"/>
    <property type="resolution" value="2.05 A"/>
    <property type="chains" value="A/B=23-321"/>
</dbReference>
<dbReference type="PDB" id="9FVC">
    <property type="method" value="X-ray"/>
    <property type="resolution" value="2.64 A"/>
    <property type="chains" value="A/B=23-321"/>
</dbReference>
<dbReference type="PDB" id="9FVE">
    <property type="method" value="X-ray"/>
    <property type="resolution" value="2.81 A"/>
    <property type="chains" value="A/C/E/G/I/K/M/O/Q/U/W/Y=22-321"/>
</dbReference>
<dbReference type="PDBsum" id="5LTC"/>
<dbReference type="PDBsum" id="7A5C"/>
<dbReference type="PDBsum" id="7A5Q"/>
<dbReference type="PDBsum" id="9FVB"/>
<dbReference type="PDBsum" id="9FVC"/>
<dbReference type="PDBsum" id="9FVE"/>
<dbReference type="SMR" id="Q9KR64"/>
<dbReference type="STRING" id="243277.VC_1779"/>
<dbReference type="TCDB" id="2.A.56.1.6">
    <property type="family name" value="the tripartite atp-independent periplasmic transporter (trap-t) family"/>
</dbReference>
<dbReference type="DNASU" id="2613659"/>
<dbReference type="EnsemblBacteria" id="AAF94928">
    <property type="protein sequence ID" value="AAF94928"/>
    <property type="gene ID" value="VC_1779"/>
</dbReference>
<dbReference type="KEGG" id="vch:VC_1779"/>
<dbReference type="PATRIC" id="fig|243277.26.peg.1699"/>
<dbReference type="eggNOG" id="COG1638">
    <property type="taxonomic scope" value="Bacteria"/>
</dbReference>
<dbReference type="HOGENOM" id="CLU_036176_1_1_6"/>
<dbReference type="Proteomes" id="UP000000584">
    <property type="component" value="Chromosome 1"/>
</dbReference>
<dbReference type="GO" id="GO:0030288">
    <property type="term" value="C:outer membrane-bounded periplasmic space"/>
    <property type="evidence" value="ECO:0007669"/>
    <property type="project" value="InterPro"/>
</dbReference>
<dbReference type="GO" id="GO:0055085">
    <property type="term" value="P:transmembrane transport"/>
    <property type="evidence" value="ECO:0007669"/>
    <property type="project" value="InterPro"/>
</dbReference>
<dbReference type="CDD" id="cd13672">
    <property type="entry name" value="PBP2_TRAP_Siap"/>
    <property type="match status" value="1"/>
</dbReference>
<dbReference type="Gene3D" id="3.40.190.170">
    <property type="entry name" value="Bacterial extracellular solute-binding protein, family 7"/>
    <property type="match status" value="1"/>
</dbReference>
<dbReference type="InterPro" id="IPR018389">
    <property type="entry name" value="DctP_fam"/>
</dbReference>
<dbReference type="InterPro" id="IPR004682">
    <property type="entry name" value="TRAP_DctP"/>
</dbReference>
<dbReference type="InterPro" id="IPR038404">
    <property type="entry name" value="TRAP_DctP_sf"/>
</dbReference>
<dbReference type="NCBIfam" id="TIGR00787">
    <property type="entry name" value="dctP"/>
    <property type="match status" value="1"/>
</dbReference>
<dbReference type="NCBIfam" id="NF037995">
    <property type="entry name" value="TRAP_S1"/>
    <property type="match status" value="1"/>
</dbReference>
<dbReference type="PANTHER" id="PTHR33376">
    <property type="match status" value="1"/>
</dbReference>
<dbReference type="PANTHER" id="PTHR33376:SF4">
    <property type="entry name" value="SIALIC ACID-BINDING PERIPLASMIC PROTEIN SIAP"/>
    <property type="match status" value="1"/>
</dbReference>
<dbReference type="Pfam" id="PF03480">
    <property type="entry name" value="DctP"/>
    <property type="match status" value="1"/>
</dbReference>
<dbReference type="PIRSF" id="PIRSF006470">
    <property type="entry name" value="DctB"/>
    <property type="match status" value="1"/>
</dbReference>
<protein>
    <recommendedName>
        <fullName evidence="5">Sialic acid-binding periplasmic protein SiaP</fullName>
    </recommendedName>
</protein>
<feature type="signal peptide" evidence="1">
    <location>
        <begin position="1"/>
        <end position="22"/>
    </location>
</feature>
<feature type="chain" id="PRO_5004328968" description="Sialic acid-binding periplasmic protein SiaP">
    <location>
        <begin position="23"/>
        <end position="321"/>
    </location>
</feature>
<feature type="strand" evidence="7">
    <location>
        <begin position="24"/>
        <end position="29"/>
    </location>
</feature>
<feature type="helix" evidence="7">
    <location>
        <begin position="37"/>
        <end position="52"/>
    </location>
</feature>
<feature type="turn" evidence="7">
    <location>
        <begin position="53"/>
        <end position="55"/>
    </location>
</feature>
<feature type="strand" evidence="7">
    <location>
        <begin position="56"/>
        <end position="62"/>
    </location>
</feature>
<feature type="turn" evidence="7">
    <location>
        <begin position="64"/>
        <end position="67"/>
    </location>
</feature>
<feature type="helix" evidence="7">
    <location>
        <begin position="70"/>
        <end position="79"/>
    </location>
</feature>
<feature type="strand" evidence="7">
    <location>
        <begin position="84"/>
        <end position="87"/>
    </location>
</feature>
<feature type="helix" evidence="7">
    <location>
        <begin position="89"/>
        <end position="94"/>
    </location>
</feature>
<feature type="helix" evidence="7">
    <location>
        <begin position="97"/>
        <end position="103"/>
    </location>
</feature>
<feature type="turn" evidence="7">
    <location>
        <begin position="105"/>
        <end position="107"/>
    </location>
</feature>
<feature type="helix" evidence="7">
    <location>
        <begin position="111"/>
        <end position="119"/>
    </location>
</feature>
<feature type="helix" evidence="7">
    <location>
        <begin position="121"/>
        <end position="134"/>
    </location>
</feature>
<feature type="strand" evidence="7">
    <location>
        <begin position="136"/>
        <end position="153"/>
    </location>
</feature>
<feature type="helix" evidence="7">
    <location>
        <begin position="158"/>
        <end position="161"/>
    </location>
</feature>
<feature type="strand" evidence="7">
    <location>
        <begin position="165"/>
        <end position="168"/>
    </location>
</feature>
<feature type="helix" evidence="7">
    <location>
        <begin position="172"/>
        <end position="180"/>
    </location>
</feature>
<feature type="strand" evidence="7">
    <location>
        <begin position="184"/>
        <end position="187"/>
    </location>
</feature>
<feature type="helix" evidence="7">
    <location>
        <begin position="190"/>
        <end position="192"/>
    </location>
</feature>
<feature type="helix" evidence="7">
    <location>
        <begin position="193"/>
        <end position="198"/>
    </location>
</feature>
<feature type="strand" evidence="7">
    <location>
        <begin position="201"/>
        <end position="208"/>
    </location>
</feature>
<feature type="helix" evidence="7">
    <location>
        <begin position="209"/>
        <end position="214"/>
    </location>
</feature>
<feature type="helix" evidence="7">
    <location>
        <begin position="217"/>
        <end position="219"/>
    </location>
</feature>
<feature type="strand" evidence="7">
    <location>
        <begin position="222"/>
        <end position="225"/>
    </location>
</feature>
<feature type="strand" evidence="7">
    <location>
        <begin position="231"/>
        <end position="239"/>
    </location>
</feature>
<feature type="helix" evidence="7">
    <location>
        <begin position="240"/>
        <end position="243"/>
    </location>
</feature>
<feature type="helix" evidence="7">
    <location>
        <begin position="248"/>
        <end position="282"/>
    </location>
</feature>
<feature type="strand" evidence="7">
    <location>
        <begin position="286"/>
        <end position="288"/>
    </location>
</feature>
<feature type="helix" evidence="7">
    <location>
        <begin position="293"/>
        <end position="310"/>
    </location>
</feature>
<feature type="helix" evidence="7">
    <location>
        <begin position="314"/>
        <end position="320"/>
    </location>
</feature>
<proteinExistence type="evidence at protein level"/>
<evidence type="ECO:0000255" key="1"/>
<evidence type="ECO:0000269" key="2">
    <source>
    </source>
</evidence>
<evidence type="ECO:0000269" key="3">
    <source>
    </source>
</evidence>
<evidence type="ECO:0000303" key="4">
    <source>
    </source>
</evidence>
<evidence type="ECO:0000305" key="5"/>
<evidence type="ECO:0000312" key="6">
    <source>
        <dbReference type="EMBL" id="AAF94928.1"/>
    </source>
</evidence>
<evidence type="ECO:0007829" key="7">
    <source>
        <dbReference type="PDB" id="7A5Q"/>
    </source>
</evidence>
<organism>
    <name type="scientific">Vibrio cholerae serotype O1 (strain ATCC 39315 / El Tor Inaba N16961)</name>
    <dbReference type="NCBI Taxonomy" id="243277"/>
    <lineage>
        <taxon>Bacteria</taxon>
        <taxon>Pseudomonadati</taxon>
        <taxon>Pseudomonadota</taxon>
        <taxon>Gammaproteobacteria</taxon>
        <taxon>Vibrionales</taxon>
        <taxon>Vibrionaceae</taxon>
        <taxon>Vibrio</taxon>
    </lineage>
</organism>
<sequence length="321" mass="35982">MKTINKITIAILTLSAAASVNAATTLKMGMQASVGSVEYNSAKMLADTLEEMSQGEIKLALYPSAQLGDDRAMLQQLTLGDLDITYAEFGRMGLWIPRAEAVMLPYVAKDFDHLRRMFESDFGQGVRDEMLQKFNWRALDTWYNGTRETTSNRPLNSIEDFKGLKLRVPNAKQNLNYAKLSGASPTPMSFSEVYLALQTNAVDGQENPLPTIKTMKFYEVQKNLAMTHHIVNDQMVIISESTWQKLSDTDKDIIQKAVQKVGDAHTQTVKTQEAELVSFFKSEGINVTYPDLEPFREAMQPLYKEFDSNIGQPIVSKLAAM</sequence>
<keyword id="KW-0002">3D-structure</keyword>
<keyword id="KW-0574">Periplasm</keyword>
<keyword id="KW-1185">Reference proteome</keyword>
<keyword id="KW-0732">Signal</keyword>
<keyword id="KW-0762">Sugar transport</keyword>
<keyword id="KW-0813">Transport</keyword>
<reference key="1">
    <citation type="journal article" date="2000" name="Nature">
        <title>DNA sequence of both chromosomes of the cholera pathogen Vibrio cholerae.</title>
        <authorList>
            <person name="Heidelberg J.F."/>
            <person name="Eisen J.A."/>
            <person name="Nelson W.C."/>
            <person name="Clayton R.A."/>
            <person name="Gwinn M.L."/>
            <person name="Dodson R.J."/>
            <person name="Haft D.H."/>
            <person name="Hickey E.K."/>
            <person name="Peterson J.D."/>
            <person name="Umayam L.A."/>
            <person name="Gill S.R."/>
            <person name="Nelson K.E."/>
            <person name="Read T.D."/>
            <person name="Tettelin H."/>
            <person name="Richardson D.L."/>
            <person name="Ermolaeva M.D."/>
            <person name="Vamathevan J.J."/>
            <person name="Bass S."/>
            <person name="Qin H."/>
            <person name="Dragoi I."/>
            <person name="Sellers P."/>
            <person name="McDonald L.A."/>
            <person name="Utterback T.R."/>
            <person name="Fleischmann R.D."/>
            <person name="Nierman W.C."/>
            <person name="White O."/>
            <person name="Salzberg S.L."/>
            <person name="Smith H.O."/>
            <person name="Colwell R.R."/>
            <person name="Mekalanos J.J."/>
            <person name="Venter J.C."/>
            <person name="Fraser C.M."/>
        </authorList>
    </citation>
    <scope>NUCLEOTIDE SEQUENCE [LARGE SCALE GENOMIC DNA]</scope>
    <source>
        <strain>ATCC 39315 / El Tor Inaba N16961</strain>
    </source>
</reference>
<reference key="2">
    <citation type="journal article" date="2012" name="J. Biol. Chem.">
        <title>The membrane proteins SiaQ and SiaM form an essential stoichiometric complex in the sialic acid tripartite ATP-independent periplasmic (TRAP) transporter SiaPQM (VC1777-1779) from Vibrio cholerae.</title>
        <authorList>
            <person name="Mulligan C."/>
            <person name="Leech A.P."/>
            <person name="Kelly D.J."/>
            <person name="Thomas G.H."/>
        </authorList>
    </citation>
    <scope>FUNCTION</scope>
    <scope>SUBUNIT</scope>
</reference>
<reference key="3">
    <citation type="journal article" date="2012" name="Microbiology">
        <title>The VC1777-VC1779 proteins are members of a sialic acid-specific subfamily of TRAP transporters (SiaPQM) and constitute the sole route of sialic acid uptake in the human pathogen Vibrio cholerae.</title>
        <authorList>
            <person name="Chowdhury N."/>
            <person name="Norris J."/>
            <person name="McAlister E."/>
            <person name="Lau S.Y."/>
            <person name="Thomas G.H."/>
            <person name="Boyd E.F."/>
        </authorList>
    </citation>
    <scope>FUNCTION</scope>
</reference>